<dbReference type="EMBL" id="CP000507">
    <property type="protein sequence ID" value="ABL98440.1"/>
    <property type="molecule type" value="Genomic_DNA"/>
</dbReference>
<dbReference type="RefSeq" id="WP_011758350.1">
    <property type="nucleotide sequence ID" value="NC_008700.1"/>
</dbReference>
<dbReference type="SMR" id="A1S234"/>
<dbReference type="STRING" id="326297.Sama_0229"/>
<dbReference type="KEGG" id="saz:Sama_0229"/>
<dbReference type="eggNOG" id="COG0256">
    <property type="taxonomic scope" value="Bacteria"/>
</dbReference>
<dbReference type="HOGENOM" id="CLU_098841_0_1_6"/>
<dbReference type="OrthoDB" id="9810939at2"/>
<dbReference type="Proteomes" id="UP000009175">
    <property type="component" value="Chromosome"/>
</dbReference>
<dbReference type="GO" id="GO:0022625">
    <property type="term" value="C:cytosolic large ribosomal subunit"/>
    <property type="evidence" value="ECO:0007669"/>
    <property type="project" value="TreeGrafter"/>
</dbReference>
<dbReference type="GO" id="GO:0008097">
    <property type="term" value="F:5S rRNA binding"/>
    <property type="evidence" value="ECO:0007669"/>
    <property type="project" value="TreeGrafter"/>
</dbReference>
<dbReference type="GO" id="GO:0003735">
    <property type="term" value="F:structural constituent of ribosome"/>
    <property type="evidence" value="ECO:0007669"/>
    <property type="project" value="InterPro"/>
</dbReference>
<dbReference type="GO" id="GO:0006412">
    <property type="term" value="P:translation"/>
    <property type="evidence" value="ECO:0007669"/>
    <property type="project" value="UniProtKB-UniRule"/>
</dbReference>
<dbReference type="CDD" id="cd00432">
    <property type="entry name" value="Ribosomal_L18_L5e"/>
    <property type="match status" value="1"/>
</dbReference>
<dbReference type="FunFam" id="3.30.420.100:FF:000001">
    <property type="entry name" value="50S ribosomal protein L18"/>
    <property type="match status" value="1"/>
</dbReference>
<dbReference type="Gene3D" id="3.30.420.100">
    <property type="match status" value="1"/>
</dbReference>
<dbReference type="HAMAP" id="MF_01337_B">
    <property type="entry name" value="Ribosomal_uL18_B"/>
    <property type="match status" value="1"/>
</dbReference>
<dbReference type="InterPro" id="IPR004389">
    <property type="entry name" value="Ribosomal_uL18_bac-type"/>
</dbReference>
<dbReference type="InterPro" id="IPR005484">
    <property type="entry name" value="Ribosomal_uL18_bac/euk"/>
</dbReference>
<dbReference type="NCBIfam" id="TIGR00060">
    <property type="entry name" value="L18_bact"/>
    <property type="match status" value="1"/>
</dbReference>
<dbReference type="PANTHER" id="PTHR12899">
    <property type="entry name" value="39S RIBOSOMAL PROTEIN L18, MITOCHONDRIAL"/>
    <property type="match status" value="1"/>
</dbReference>
<dbReference type="PANTHER" id="PTHR12899:SF3">
    <property type="entry name" value="LARGE RIBOSOMAL SUBUNIT PROTEIN UL18M"/>
    <property type="match status" value="1"/>
</dbReference>
<dbReference type="Pfam" id="PF00861">
    <property type="entry name" value="Ribosomal_L18p"/>
    <property type="match status" value="1"/>
</dbReference>
<dbReference type="SUPFAM" id="SSF53137">
    <property type="entry name" value="Translational machinery components"/>
    <property type="match status" value="1"/>
</dbReference>
<organism>
    <name type="scientific">Shewanella amazonensis (strain ATCC BAA-1098 / SB2B)</name>
    <dbReference type="NCBI Taxonomy" id="326297"/>
    <lineage>
        <taxon>Bacteria</taxon>
        <taxon>Pseudomonadati</taxon>
        <taxon>Pseudomonadota</taxon>
        <taxon>Gammaproteobacteria</taxon>
        <taxon>Alteromonadales</taxon>
        <taxon>Shewanellaceae</taxon>
        <taxon>Shewanella</taxon>
    </lineage>
</organism>
<accession>A1S234</accession>
<proteinExistence type="inferred from homology"/>
<sequence>MDKKSSRLRRATRARKKIQELGVHRLVVHRTPRHIYAQVINPEAQVVAAASTVEKSIKEALKSTGNVDAAKAVGKAIAERAVEKGVTVVAFDRSGFKYHGRVAALADAAREAGLQF</sequence>
<comment type="function">
    <text evidence="1">This is one of the proteins that bind and probably mediate the attachment of the 5S RNA into the large ribosomal subunit, where it forms part of the central protuberance.</text>
</comment>
<comment type="subunit">
    <text evidence="1">Part of the 50S ribosomal subunit; part of the 5S rRNA/L5/L18/L25 subcomplex. Contacts the 5S and 23S rRNAs.</text>
</comment>
<comment type="similarity">
    <text evidence="1">Belongs to the universal ribosomal protein uL18 family.</text>
</comment>
<keyword id="KW-1185">Reference proteome</keyword>
<keyword id="KW-0687">Ribonucleoprotein</keyword>
<keyword id="KW-0689">Ribosomal protein</keyword>
<keyword id="KW-0694">RNA-binding</keyword>
<keyword id="KW-0699">rRNA-binding</keyword>
<feature type="chain" id="PRO_1000053103" description="Large ribosomal subunit protein uL18">
    <location>
        <begin position="1"/>
        <end position="116"/>
    </location>
</feature>
<evidence type="ECO:0000255" key="1">
    <source>
        <dbReference type="HAMAP-Rule" id="MF_01337"/>
    </source>
</evidence>
<evidence type="ECO:0000305" key="2"/>
<name>RL18_SHEAM</name>
<reference key="1">
    <citation type="submission" date="2006-12" db="EMBL/GenBank/DDBJ databases">
        <title>Complete sequence of Shewanella amazonensis SB2B.</title>
        <authorList>
            <consortium name="US DOE Joint Genome Institute"/>
            <person name="Copeland A."/>
            <person name="Lucas S."/>
            <person name="Lapidus A."/>
            <person name="Barry K."/>
            <person name="Detter J.C."/>
            <person name="Glavina del Rio T."/>
            <person name="Hammon N."/>
            <person name="Israni S."/>
            <person name="Dalin E."/>
            <person name="Tice H."/>
            <person name="Pitluck S."/>
            <person name="Munk A.C."/>
            <person name="Brettin T."/>
            <person name="Bruce D."/>
            <person name="Han C."/>
            <person name="Tapia R."/>
            <person name="Gilna P."/>
            <person name="Schmutz J."/>
            <person name="Larimer F."/>
            <person name="Land M."/>
            <person name="Hauser L."/>
            <person name="Kyrpides N."/>
            <person name="Mikhailova N."/>
            <person name="Fredrickson J."/>
            <person name="Richardson P."/>
        </authorList>
    </citation>
    <scope>NUCLEOTIDE SEQUENCE [LARGE SCALE GENOMIC DNA]</scope>
    <source>
        <strain>ATCC BAA-1098 / SB2B</strain>
    </source>
</reference>
<gene>
    <name evidence="1" type="primary">rplR</name>
    <name type="ordered locus">Sama_0229</name>
</gene>
<protein>
    <recommendedName>
        <fullName evidence="1">Large ribosomal subunit protein uL18</fullName>
    </recommendedName>
    <alternativeName>
        <fullName evidence="2">50S ribosomal protein L18</fullName>
    </alternativeName>
</protein>